<name>PYRF_BACMK</name>
<protein>
    <recommendedName>
        <fullName evidence="1">Orotidine 5'-phosphate decarboxylase</fullName>
        <ecNumber evidence="1">4.1.1.23</ecNumber>
    </recommendedName>
    <alternativeName>
        <fullName evidence="1">OMP decarboxylase</fullName>
        <shortName evidence="1">OMPDCase</shortName>
        <shortName evidence="1">OMPdecase</shortName>
    </alternativeName>
</protein>
<gene>
    <name evidence="1" type="primary">pyrF</name>
    <name type="ordered locus">BcerKBAB4_3710</name>
</gene>
<proteinExistence type="inferred from homology"/>
<reference key="1">
    <citation type="journal article" date="2008" name="Chem. Biol. Interact.">
        <title>Extending the Bacillus cereus group genomics to putative food-borne pathogens of different toxicity.</title>
        <authorList>
            <person name="Lapidus A."/>
            <person name="Goltsman E."/>
            <person name="Auger S."/>
            <person name="Galleron N."/>
            <person name="Segurens B."/>
            <person name="Dossat C."/>
            <person name="Land M.L."/>
            <person name="Broussolle V."/>
            <person name="Brillard J."/>
            <person name="Guinebretiere M.-H."/>
            <person name="Sanchis V."/>
            <person name="Nguen-the C."/>
            <person name="Lereclus D."/>
            <person name="Richardson P."/>
            <person name="Wincker P."/>
            <person name="Weissenbach J."/>
            <person name="Ehrlich S.D."/>
            <person name="Sorokin A."/>
        </authorList>
    </citation>
    <scope>NUCLEOTIDE SEQUENCE [LARGE SCALE GENOMIC DNA]</scope>
    <source>
        <strain>KBAB4</strain>
    </source>
</reference>
<accession>A9VTC3</accession>
<feature type="chain" id="PRO_1000138515" description="Orotidine 5'-phosphate decarboxylase">
    <location>
        <begin position="1"/>
        <end position="238"/>
    </location>
</feature>
<feature type="active site" description="Proton donor" evidence="1">
    <location>
        <position position="61"/>
    </location>
</feature>
<feature type="binding site" evidence="1">
    <location>
        <position position="10"/>
    </location>
    <ligand>
        <name>substrate</name>
    </ligand>
</feature>
<feature type="binding site" evidence="1">
    <location>
        <position position="32"/>
    </location>
    <ligand>
        <name>substrate</name>
    </ligand>
</feature>
<feature type="binding site" evidence="1">
    <location>
        <begin position="59"/>
        <end position="68"/>
    </location>
    <ligand>
        <name>substrate</name>
    </ligand>
</feature>
<feature type="binding site" evidence="1">
    <location>
        <position position="122"/>
    </location>
    <ligand>
        <name>substrate</name>
    </ligand>
</feature>
<feature type="binding site" evidence="1">
    <location>
        <position position="184"/>
    </location>
    <ligand>
        <name>substrate</name>
    </ligand>
</feature>
<feature type="binding site" evidence="1">
    <location>
        <position position="193"/>
    </location>
    <ligand>
        <name>substrate</name>
    </ligand>
</feature>
<feature type="binding site" evidence="1">
    <location>
        <position position="213"/>
    </location>
    <ligand>
        <name>substrate</name>
    </ligand>
</feature>
<feature type="binding site" evidence="1">
    <location>
        <position position="214"/>
    </location>
    <ligand>
        <name>substrate</name>
    </ligand>
</feature>
<organism>
    <name type="scientific">Bacillus mycoides (strain KBAB4)</name>
    <name type="common">Bacillus weihenstephanensis</name>
    <dbReference type="NCBI Taxonomy" id="315730"/>
    <lineage>
        <taxon>Bacteria</taxon>
        <taxon>Bacillati</taxon>
        <taxon>Bacillota</taxon>
        <taxon>Bacilli</taxon>
        <taxon>Bacillales</taxon>
        <taxon>Bacillaceae</taxon>
        <taxon>Bacillus</taxon>
        <taxon>Bacillus cereus group</taxon>
    </lineage>
</organism>
<keyword id="KW-0210">Decarboxylase</keyword>
<keyword id="KW-0456">Lyase</keyword>
<keyword id="KW-0665">Pyrimidine biosynthesis</keyword>
<comment type="function">
    <text evidence="1">Catalyzes the decarboxylation of orotidine 5'-monophosphate (OMP) to uridine 5'-monophosphate (UMP).</text>
</comment>
<comment type="catalytic activity">
    <reaction evidence="1">
        <text>orotidine 5'-phosphate + H(+) = UMP + CO2</text>
        <dbReference type="Rhea" id="RHEA:11596"/>
        <dbReference type="ChEBI" id="CHEBI:15378"/>
        <dbReference type="ChEBI" id="CHEBI:16526"/>
        <dbReference type="ChEBI" id="CHEBI:57538"/>
        <dbReference type="ChEBI" id="CHEBI:57865"/>
        <dbReference type="EC" id="4.1.1.23"/>
    </reaction>
</comment>
<comment type="pathway">
    <text evidence="1">Pyrimidine metabolism; UMP biosynthesis via de novo pathway; UMP from orotate: step 2/2.</text>
</comment>
<comment type="subunit">
    <text evidence="1">Homodimer.</text>
</comment>
<comment type="similarity">
    <text evidence="1">Belongs to the OMP decarboxylase family. Type 1 subfamily.</text>
</comment>
<evidence type="ECO:0000255" key="1">
    <source>
        <dbReference type="HAMAP-Rule" id="MF_01200"/>
    </source>
</evidence>
<dbReference type="EC" id="4.1.1.23" evidence="1"/>
<dbReference type="EMBL" id="CP000903">
    <property type="protein sequence ID" value="ABY44879.1"/>
    <property type="molecule type" value="Genomic_DNA"/>
</dbReference>
<dbReference type="RefSeq" id="WP_012261600.1">
    <property type="nucleotide sequence ID" value="NC_010184.1"/>
</dbReference>
<dbReference type="SMR" id="A9VTC3"/>
<dbReference type="KEGG" id="bwe:BcerKBAB4_3710"/>
<dbReference type="eggNOG" id="COG0284">
    <property type="taxonomic scope" value="Bacteria"/>
</dbReference>
<dbReference type="HOGENOM" id="CLU_067069_1_1_9"/>
<dbReference type="UniPathway" id="UPA00070">
    <property type="reaction ID" value="UER00120"/>
</dbReference>
<dbReference type="Proteomes" id="UP000002154">
    <property type="component" value="Chromosome"/>
</dbReference>
<dbReference type="GO" id="GO:0005829">
    <property type="term" value="C:cytosol"/>
    <property type="evidence" value="ECO:0007669"/>
    <property type="project" value="TreeGrafter"/>
</dbReference>
<dbReference type="GO" id="GO:0004590">
    <property type="term" value="F:orotidine-5'-phosphate decarboxylase activity"/>
    <property type="evidence" value="ECO:0007669"/>
    <property type="project" value="UniProtKB-UniRule"/>
</dbReference>
<dbReference type="GO" id="GO:0006207">
    <property type="term" value="P:'de novo' pyrimidine nucleobase biosynthetic process"/>
    <property type="evidence" value="ECO:0007669"/>
    <property type="project" value="InterPro"/>
</dbReference>
<dbReference type="GO" id="GO:0044205">
    <property type="term" value="P:'de novo' UMP biosynthetic process"/>
    <property type="evidence" value="ECO:0007669"/>
    <property type="project" value="UniProtKB-UniRule"/>
</dbReference>
<dbReference type="CDD" id="cd04725">
    <property type="entry name" value="OMP_decarboxylase_like"/>
    <property type="match status" value="1"/>
</dbReference>
<dbReference type="FunFam" id="3.20.20.70:FF:000015">
    <property type="entry name" value="Orotidine 5'-phosphate decarboxylase"/>
    <property type="match status" value="1"/>
</dbReference>
<dbReference type="Gene3D" id="3.20.20.70">
    <property type="entry name" value="Aldolase class I"/>
    <property type="match status" value="1"/>
</dbReference>
<dbReference type="HAMAP" id="MF_01200_B">
    <property type="entry name" value="OMPdecase_type1_B"/>
    <property type="match status" value="1"/>
</dbReference>
<dbReference type="InterPro" id="IPR013785">
    <property type="entry name" value="Aldolase_TIM"/>
</dbReference>
<dbReference type="InterPro" id="IPR014732">
    <property type="entry name" value="OMPdecase"/>
</dbReference>
<dbReference type="InterPro" id="IPR018089">
    <property type="entry name" value="OMPdecase_AS"/>
</dbReference>
<dbReference type="InterPro" id="IPR047596">
    <property type="entry name" value="OMPdecase_bac"/>
</dbReference>
<dbReference type="InterPro" id="IPR001754">
    <property type="entry name" value="OMPdeCOase_dom"/>
</dbReference>
<dbReference type="InterPro" id="IPR011060">
    <property type="entry name" value="RibuloseP-bd_barrel"/>
</dbReference>
<dbReference type="NCBIfam" id="NF001273">
    <property type="entry name" value="PRK00230.1"/>
    <property type="match status" value="1"/>
</dbReference>
<dbReference type="NCBIfam" id="TIGR01740">
    <property type="entry name" value="pyrF"/>
    <property type="match status" value="1"/>
</dbReference>
<dbReference type="PANTHER" id="PTHR32119">
    <property type="entry name" value="OROTIDINE 5'-PHOSPHATE DECARBOXYLASE"/>
    <property type="match status" value="1"/>
</dbReference>
<dbReference type="PANTHER" id="PTHR32119:SF2">
    <property type="entry name" value="OROTIDINE 5'-PHOSPHATE DECARBOXYLASE"/>
    <property type="match status" value="1"/>
</dbReference>
<dbReference type="Pfam" id="PF00215">
    <property type="entry name" value="OMPdecase"/>
    <property type="match status" value="1"/>
</dbReference>
<dbReference type="SMART" id="SM00934">
    <property type="entry name" value="OMPdecase"/>
    <property type="match status" value="1"/>
</dbReference>
<dbReference type="SUPFAM" id="SSF51366">
    <property type="entry name" value="Ribulose-phoshate binding barrel"/>
    <property type="match status" value="1"/>
</dbReference>
<dbReference type="PROSITE" id="PS00156">
    <property type="entry name" value="OMPDECASE"/>
    <property type="match status" value="1"/>
</dbReference>
<sequence length="238" mass="26223">MSQSLIVALDFPGKQEVEQFLHHFEGEELFVKVGMELFYKEGPAIITYLKEKGHKIFLDLKLHDIPNTVKSAMRSLASLDVDMVNVHAAGGSSMMKAAIEGLEEGKQEGKERPICIAVTQLTSTSETMMKKEIGIEKTLEEAVAHYAKLTKESGLDGVVCSTLEVPKLREVCGNEFVTVTPGIRLASDDVNDQVRVATPKRARELGSSYIVVGRSITKAENPLEAYKTVKQQWEGVTV</sequence>